<evidence type="ECO:0000255" key="1">
    <source>
        <dbReference type="HAMAP-Rule" id="MF_01522"/>
    </source>
</evidence>
<proteinExistence type="inferred from homology"/>
<keyword id="KW-0997">Cell inner membrane</keyword>
<keyword id="KW-1003">Cell membrane</keyword>
<keyword id="KW-0406">Ion transport</keyword>
<keyword id="KW-0472">Membrane</keyword>
<keyword id="KW-0630">Potassium</keyword>
<keyword id="KW-0633">Potassium transport</keyword>
<keyword id="KW-0769">Symport</keyword>
<keyword id="KW-0812">Transmembrane</keyword>
<keyword id="KW-1133">Transmembrane helix</keyword>
<keyword id="KW-0813">Transport</keyword>
<reference key="1">
    <citation type="journal article" date="2006" name="J. Bacteriol.">
        <title>Complete genome sequence of Yersinia pestis strains Antiqua and Nepal516: evidence of gene reduction in an emerging pathogen.</title>
        <authorList>
            <person name="Chain P.S.G."/>
            <person name="Hu P."/>
            <person name="Malfatti S.A."/>
            <person name="Radnedge L."/>
            <person name="Larimer F."/>
            <person name="Vergez L.M."/>
            <person name="Worsham P."/>
            <person name="Chu M.C."/>
            <person name="Andersen G.L."/>
        </authorList>
    </citation>
    <scope>NUCLEOTIDE SEQUENCE [LARGE SCALE GENOMIC DNA]</scope>
    <source>
        <strain>Antiqua</strain>
    </source>
</reference>
<comment type="function">
    <text evidence="1">Responsible for the low-affinity transport of potassium into the cell. Likely operates as a K(+):H(+) symporter.</text>
</comment>
<comment type="catalytic activity">
    <reaction evidence="1">
        <text>K(+)(in) + H(+)(in) = K(+)(out) + H(+)(out)</text>
        <dbReference type="Rhea" id="RHEA:28490"/>
        <dbReference type="ChEBI" id="CHEBI:15378"/>
        <dbReference type="ChEBI" id="CHEBI:29103"/>
    </reaction>
    <physiologicalReaction direction="right-to-left" evidence="1">
        <dbReference type="Rhea" id="RHEA:28492"/>
    </physiologicalReaction>
</comment>
<comment type="subcellular location">
    <subcellularLocation>
        <location evidence="1">Cell inner membrane</location>
        <topology evidence="1">Multi-pass membrane protein</topology>
    </subcellularLocation>
</comment>
<comment type="similarity">
    <text evidence="1">Belongs to the HAK/KUP transporter (TC 2.A.72) family.</text>
</comment>
<protein>
    <recommendedName>
        <fullName evidence="1">Low affinity potassium transport system protein Kup</fullName>
    </recommendedName>
    <alternativeName>
        <fullName evidence="1">Kup system potassium uptake protein</fullName>
    </alternativeName>
</protein>
<accession>Q1CC44</accession>
<dbReference type="EMBL" id="CP000308">
    <property type="protein sequence ID" value="ABG11978.1"/>
    <property type="molecule type" value="Genomic_DNA"/>
</dbReference>
<dbReference type="RefSeq" id="WP_002212253.1">
    <property type="nucleotide sequence ID" value="NZ_CP009906.1"/>
</dbReference>
<dbReference type="GeneID" id="57974588"/>
<dbReference type="KEGG" id="ypa:YPA_0009"/>
<dbReference type="Proteomes" id="UP000001971">
    <property type="component" value="Chromosome"/>
</dbReference>
<dbReference type="GO" id="GO:0005886">
    <property type="term" value="C:plasma membrane"/>
    <property type="evidence" value="ECO:0007669"/>
    <property type="project" value="UniProtKB-SubCell"/>
</dbReference>
<dbReference type="GO" id="GO:0015079">
    <property type="term" value="F:potassium ion transmembrane transporter activity"/>
    <property type="evidence" value="ECO:0007669"/>
    <property type="project" value="UniProtKB-UniRule"/>
</dbReference>
<dbReference type="GO" id="GO:0015293">
    <property type="term" value="F:symporter activity"/>
    <property type="evidence" value="ECO:0007669"/>
    <property type="project" value="UniProtKB-UniRule"/>
</dbReference>
<dbReference type="HAMAP" id="MF_01522">
    <property type="entry name" value="Kup"/>
    <property type="match status" value="1"/>
</dbReference>
<dbReference type="InterPro" id="IPR003855">
    <property type="entry name" value="K+_transporter"/>
</dbReference>
<dbReference type="InterPro" id="IPR053952">
    <property type="entry name" value="K_trans_C"/>
</dbReference>
<dbReference type="InterPro" id="IPR053951">
    <property type="entry name" value="K_trans_N"/>
</dbReference>
<dbReference type="InterPro" id="IPR023051">
    <property type="entry name" value="Kup"/>
</dbReference>
<dbReference type="NCBIfam" id="TIGR00794">
    <property type="entry name" value="kup"/>
    <property type="match status" value="1"/>
</dbReference>
<dbReference type="NCBIfam" id="NF008015">
    <property type="entry name" value="PRK10745.1"/>
    <property type="match status" value="1"/>
</dbReference>
<dbReference type="PANTHER" id="PTHR30540:SF79">
    <property type="entry name" value="LOW AFFINITY POTASSIUM TRANSPORT SYSTEM PROTEIN KUP"/>
    <property type="match status" value="1"/>
</dbReference>
<dbReference type="PANTHER" id="PTHR30540">
    <property type="entry name" value="OSMOTIC STRESS POTASSIUM TRANSPORTER"/>
    <property type="match status" value="1"/>
</dbReference>
<dbReference type="Pfam" id="PF02705">
    <property type="entry name" value="K_trans"/>
    <property type="match status" value="1"/>
</dbReference>
<dbReference type="Pfam" id="PF22776">
    <property type="entry name" value="K_trans_C"/>
    <property type="match status" value="1"/>
</dbReference>
<gene>
    <name evidence="1" type="primary">kup</name>
    <name type="ordered locus">YPA_0009</name>
</gene>
<sequence>MSTEHKQYLSAVTLAAIGVVYGDIGTSPLYTLRECFSGHYGFDVRPDVVFGFLSLIFWMLILVVSVKYLTYVMRADNAGEGGILTLMSLAGRNTSSRATSILVVLGLIGGSFFYGEVVITPAISVMSAIEGLEIAAPALDPYIVPCSIAVLTLLFVIQKHGTGSVGKLFAPVMLVWFLTLALLGLRSIIANPEVLAALNPKWAISFFVEYKSVSFFALGAVVLAITGVEALYADMGHFGKFPIRLAWFTVVLPSLVLNYFGQGALLLKNPEAIKNPFFLLAPDWALIPLLILATLATVIASQAVISGVFSLTRQAVRLGYLPPMRIIHTSEMESGQIYIPVINWTLYLAVVLVIIGFERSSNLAAAYGIAVTGTMVITSILFCTVAWKNWHWNRFLVVFLLMVLLIIDIPMFSANVLKLFSGGWLPLSLGLVMFIIMTTWKSERFSLLRRMHEHSNSLEAMIASLEKSPPVRVPGTAVYMSRAMNVIPFALLHNLKHNKVLHERVVLLTMRTDDVPYVHNVERVTIEQLSPTFWRVVARYGWRETPNVAEIFHRCGLEGLSCQMMETSFFMSHESLILTKRPWHLFLRGKLFIALSRNALRAPDQFEIPPNRVIELGTQVEI</sequence>
<feature type="chain" id="PRO_0000279845" description="Low affinity potassium transport system protein Kup">
    <location>
        <begin position="1"/>
        <end position="622"/>
    </location>
</feature>
<feature type="transmembrane region" description="Helical" evidence="1">
    <location>
        <begin position="9"/>
        <end position="29"/>
    </location>
</feature>
<feature type="transmembrane region" description="Helical" evidence="1">
    <location>
        <begin position="46"/>
        <end position="66"/>
    </location>
</feature>
<feature type="transmembrane region" description="Helical" evidence="1">
    <location>
        <begin position="101"/>
        <end position="121"/>
    </location>
</feature>
<feature type="transmembrane region" description="Helical" evidence="1">
    <location>
        <begin position="137"/>
        <end position="157"/>
    </location>
</feature>
<feature type="transmembrane region" description="Helical" evidence="1">
    <location>
        <begin position="165"/>
        <end position="185"/>
    </location>
</feature>
<feature type="transmembrane region" description="Helical" evidence="1">
    <location>
        <begin position="213"/>
        <end position="233"/>
    </location>
</feature>
<feature type="transmembrane region" description="Helical" evidence="1">
    <location>
        <begin position="247"/>
        <end position="267"/>
    </location>
</feature>
<feature type="transmembrane region" description="Helical" evidence="1">
    <location>
        <begin position="276"/>
        <end position="296"/>
    </location>
</feature>
<feature type="transmembrane region" description="Helical" evidence="1">
    <location>
        <begin position="337"/>
        <end position="357"/>
    </location>
</feature>
<feature type="transmembrane region" description="Helical" evidence="1">
    <location>
        <begin position="363"/>
        <end position="383"/>
    </location>
</feature>
<feature type="transmembrane region" description="Helical" evidence="1">
    <location>
        <begin position="395"/>
        <end position="415"/>
    </location>
</feature>
<feature type="transmembrane region" description="Helical" evidence="1">
    <location>
        <begin position="416"/>
        <end position="436"/>
    </location>
</feature>
<organism>
    <name type="scientific">Yersinia pestis bv. Antiqua (strain Antiqua)</name>
    <dbReference type="NCBI Taxonomy" id="360102"/>
    <lineage>
        <taxon>Bacteria</taxon>
        <taxon>Pseudomonadati</taxon>
        <taxon>Pseudomonadota</taxon>
        <taxon>Gammaproteobacteria</taxon>
        <taxon>Enterobacterales</taxon>
        <taxon>Yersiniaceae</taxon>
        <taxon>Yersinia</taxon>
    </lineage>
</organism>
<name>KUP_YERPA</name>